<comment type="function">
    <text evidence="1">Could be involved in insertion of integral membrane proteins into the membrane.</text>
</comment>
<comment type="subcellular location">
    <subcellularLocation>
        <location evidence="1">Cell inner membrane</location>
        <topology evidence="1">Peripheral membrane protein</topology>
        <orientation evidence="1">Cytoplasmic side</orientation>
    </subcellularLocation>
</comment>
<comment type="similarity">
    <text evidence="1">Belongs to the UPF0161 family.</text>
</comment>
<keyword id="KW-0997">Cell inner membrane</keyword>
<keyword id="KW-1003">Cell membrane</keyword>
<keyword id="KW-0472">Membrane</keyword>
<keyword id="KW-1185">Reference proteome</keyword>
<feature type="chain" id="PRO_0000253143" description="Putative membrane protein insertion efficiency factor">
    <location>
        <begin position="1"/>
        <end position="91"/>
    </location>
</feature>
<feature type="region of interest" description="Disordered" evidence="2">
    <location>
        <begin position="72"/>
        <end position="91"/>
    </location>
</feature>
<feature type="compositionally biased region" description="Basic and acidic residues" evidence="2">
    <location>
        <begin position="78"/>
        <end position="91"/>
    </location>
</feature>
<dbReference type="EMBL" id="CR954246">
    <property type="protein sequence ID" value="CAI88052.1"/>
    <property type="molecule type" value="Genomic_DNA"/>
</dbReference>
<dbReference type="STRING" id="326442.PSHAa3023"/>
<dbReference type="KEGG" id="pha:PSHAa3023"/>
<dbReference type="PATRIC" id="fig|326442.8.peg.2913"/>
<dbReference type="eggNOG" id="COG0759">
    <property type="taxonomic scope" value="Bacteria"/>
</dbReference>
<dbReference type="HOGENOM" id="CLU_144811_5_2_6"/>
<dbReference type="BioCyc" id="PHAL326442:PSHA_RS14835-MONOMER"/>
<dbReference type="Proteomes" id="UP000006843">
    <property type="component" value="Chromosome I"/>
</dbReference>
<dbReference type="GO" id="GO:0005886">
    <property type="term" value="C:plasma membrane"/>
    <property type="evidence" value="ECO:0007669"/>
    <property type="project" value="UniProtKB-SubCell"/>
</dbReference>
<dbReference type="HAMAP" id="MF_00386">
    <property type="entry name" value="UPF0161_YidD"/>
    <property type="match status" value="1"/>
</dbReference>
<dbReference type="InterPro" id="IPR002696">
    <property type="entry name" value="Membr_insert_effic_factor_YidD"/>
</dbReference>
<dbReference type="NCBIfam" id="TIGR00278">
    <property type="entry name" value="membrane protein insertion efficiency factor YidD"/>
    <property type="match status" value="1"/>
</dbReference>
<dbReference type="PANTHER" id="PTHR33383">
    <property type="entry name" value="MEMBRANE PROTEIN INSERTION EFFICIENCY FACTOR-RELATED"/>
    <property type="match status" value="1"/>
</dbReference>
<dbReference type="PANTHER" id="PTHR33383:SF1">
    <property type="entry name" value="MEMBRANE PROTEIN INSERTION EFFICIENCY FACTOR-RELATED"/>
    <property type="match status" value="1"/>
</dbReference>
<dbReference type="Pfam" id="PF01809">
    <property type="entry name" value="YidD"/>
    <property type="match status" value="1"/>
</dbReference>
<dbReference type="SMART" id="SM01234">
    <property type="entry name" value="Haemolytic"/>
    <property type="match status" value="1"/>
</dbReference>
<organism>
    <name type="scientific">Pseudoalteromonas translucida (strain TAC 125)</name>
    <dbReference type="NCBI Taxonomy" id="326442"/>
    <lineage>
        <taxon>Bacteria</taxon>
        <taxon>Pseudomonadati</taxon>
        <taxon>Pseudomonadota</taxon>
        <taxon>Gammaproteobacteria</taxon>
        <taxon>Alteromonadales</taxon>
        <taxon>Pseudoalteromonadaceae</taxon>
        <taxon>Pseudoalteromonas</taxon>
    </lineage>
</organism>
<proteinExistence type="inferred from homology"/>
<sequence length="91" mass="10289">MRLLKPLVALPTYCLVLFIRGYQKWISPLLGPHCRFNPTCSSYAIQAINLHGSVKGSWLAVKRILKCHPLHSGGNDPVPEKLTHINHQHEK</sequence>
<name>YIDD_PSET1</name>
<protein>
    <recommendedName>
        <fullName evidence="1">Putative membrane protein insertion efficiency factor</fullName>
    </recommendedName>
</protein>
<evidence type="ECO:0000255" key="1">
    <source>
        <dbReference type="HAMAP-Rule" id="MF_00386"/>
    </source>
</evidence>
<evidence type="ECO:0000256" key="2">
    <source>
        <dbReference type="SAM" id="MobiDB-lite"/>
    </source>
</evidence>
<gene>
    <name type="ordered locus">PSHAa3023</name>
</gene>
<reference key="1">
    <citation type="journal article" date="2005" name="Genome Res.">
        <title>Coping with cold: the genome of the versatile marine Antarctica bacterium Pseudoalteromonas haloplanktis TAC125.</title>
        <authorList>
            <person name="Medigue C."/>
            <person name="Krin E."/>
            <person name="Pascal G."/>
            <person name="Barbe V."/>
            <person name="Bernsel A."/>
            <person name="Bertin P.N."/>
            <person name="Cheung F."/>
            <person name="Cruveiller S."/>
            <person name="D'Amico S."/>
            <person name="Duilio A."/>
            <person name="Fang G."/>
            <person name="Feller G."/>
            <person name="Ho C."/>
            <person name="Mangenot S."/>
            <person name="Marino G."/>
            <person name="Nilsson J."/>
            <person name="Parrilli E."/>
            <person name="Rocha E.P.C."/>
            <person name="Rouy Z."/>
            <person name="Sekowska A."/>
            <person name="Tutino M.L."/>
            <person name="Vallenet D."/>
            <person name="von Heijne G."/>
            <person name="Danchin A."/>
        </authorList>
    </citation>
    <scope>NUCLEOTIDE SEQUENCE [LARGE SCALE GENOMIC DNA]</scope>
    <source>
        <strain>TAC 125</strain>
    </source>
</reference>
<accession>Q3IK54</accession>